<comment type="function">
    <text>Probably involved in the assembly of some coat protein components implicated in both lysozyme resistance and germination. Could be required for the assembly of CotG. Associates with SpoIVD during the early stage of coat assembly.</text>
</comment>
<comment type="subcellular location">
    <subcellularLocation>
        <location evidence="3">Spore cortex</location>
    </subcellularLocation>
    <text>At the coat-cortex interface.</text>
</comment>
<comment type="induction">
    <text>Transcribed by SigE at time T2 of sporulation.</text>
</comment>
<comment type="miscellaneous">
    <text>Several coat proteins are extracted in reduced amounts from SafA mutant spores, one of which is CotG. SafA mutant spores have abnormal coat layers and have lost their resistance to lysozyme. Their response to L-alanine suggest that they have a defect at a late stage of spore germination. Their response to AGFK also suggests that they have an additional defect at a early stage of spore germination. The mutation of SafA has no effect on vegetative growth and spore resistance to heat and chloroform.</text>
</comment>
<comment type="miscellaneous">
    <text>In wild-type cells, during the early stages of sporulation, a product of 43 kDa (the predicted size of SafA) was detected. However, in later stages, a 30-kDa species was the major form of SafA detected. The N-terminus sequence of the 30-kDa product starts at Met-164. It is not known if the smaller form results from proteolysis or from translation initiated at Met-164.</text>
</comment>
<sequence length="387" mass="43229">MKIHIVQKGDSLWKIAEKYGVDVEEVKKLNTQLSNPDLIMPGMKIKVPSEGVPVRKEPKAGKSPAAGSVKQEHPYAKEKPKSVVDVEDTKPKEKKSMPYVPPMPNLQENVYPEADVNDYYDMKQLFQPWSPPKPEEPKKHHDGNMDHMYHMQDQFPQQEAMSNMENANYPNMPNMPKAPEVGGIEEENVHHTVPNMPMPAVQPYYHYPAHFVPCPVPVSPILPGSGLCYPYYPAQAYPMHPMHGYQPGFVSPQYDPGYENQHHENSHHGHYGSYGAPQYASPAYGSPYGHMPYGPYYGTPQVMGAYQPAAAHGYMPYKDHDDCGCDGDHQPYFSAPGHSGMGAYGSPNMPYGTANPNPNPYSAGVSMPMTNQPSVNQMFGRPEEENE</sequence>
<accession>O32062</accession>
<accession>O52861</accession>
<accession>Q799D6</accession>
<feature type="chain" id="PRO_0000246074" description="SpoIVD-associated factor A">
    <location>
        <begin position="1"/>
        <end position="387"/>
    </location>
</feature>
<feature type="domain" description="LysM" evidence="1">
    <location>
        <begin position="2"/>
        <end position="47"/>
    </location>
</feature>
<feature type="region of interest" description="Disordered" evidence="2">
    <location>
        <begin position="49"/>
        <end position="106"/>
    </location>
</feature>
<feature type="region of interest" description="Disordered" evidence="2">
    <location>
        <begin position="355"/>
        <end position="387"/>
    </location>
</feature>
<feature type="compositionally biased region" description="Basic and acidic residues" evidence="2">
    <location>
        <begin position="70"/>
        <end position="96"/>
    </location>
</feature>
<feature type="compositionally biased region" description="Polar residues" evidence="2">
    <location>
        <begin position="368"/>
        <end position="377"/>
    </location>
</feature>
<feature type="sequence conflict" description="In Ref. 2; BAA24943." evidence="4" ref="2">
    <original>I</original>
    <variation>V</variation>
    <location>
        <position position="184"/>
    </location>
</feature>
<feature type="sequence conflict" description="In Ref. 2; BAA24943." evidence="4" ref="2">
    <original>Y</original>
    <variation>F</variation>
    <location>
        <position position="237"/>
    </location>
</feature>
<feature type="sequence conflict" description="In Ref. 2; BAA24943." evidence="4" ref="2">
    <original>S</original>
    <variation>T</variation>
    <location>
        <position position="266"/>
    </location>
</feature>
<name>SAFA_BACSU</name>
<dbReference type="EMBL" id="Y15896">
    <property type="protein sequence ID" value="CAB75322.1"/>
    <property type="molecule type" value="Genomic_DNA"/>
</dbReference>
<dbReference type="EMBL" id="D50551">
    <property type="protein sequence ID" value="BAA24943.1"/>
    <property type="molecule type" value="Genomic_DNA"/>
</dbReference>
<dbReference type="EMBL" id="AL009126">
    <property type="protein sequence ID" value="CAB14744.1"/>
    <property type="molecule type" value="Genomic_DNA"/>
</dbReference>
<dbReference type="PIR" id="H69971">
    <property type="entry name" value="H69971"/>
</dbReference>
<dbReference type="RefSeq" id="NP_390662.1">
    <property type="nucleotide sequence ID" value="NC_000964.3"/>
</dbReference>
<dbReference type="RefSeq" id="WP_003229695.1">
    <property type="nucleotide sequence ID" value="NZ_OZ025638.1"/>
</dbReference>
<dbReference type="SMR" id="O32062"/>
<dbReference type="FunCoup" id="O32062">
    <property type="interactions" value="8"/>
</dbReference>
<dbReference type="IntAct" id="O32062">
    <property type="interactions" value="1"/>
</dbReference>
<dbReference type="STRING" id="224308.BSU27840"/>
<dbReference type="PaxDb" id="224308-BSU27840"/>
<dbReference type="EnsemblBacteria" id="CAB14744">
    <property type="protein sequence ID" value="CAB14744"/>
    <property type="gene ID" value="BSU_27840"/>
</dbReference>
<dbReference type="GeneID" id="937514"/>
<dbReference type="KEGG" id="bsu:BSU27840"/>
<dbReference type="PATRIC" id="fig|224308.179.peg.3025"/>
<dbReference type="eggNOG" id="COG1388">
    <property type="taxonomic scope" value="Bacteria"/>
</dbReference>
<dbReference type="InParanoid" id="O32062"/>
<dbReference type="OrthoDB" id="2033517at2"/>
<dbReference type="BioCyc" id="BSUB:BSU27840-MONOMER"/>
<dbReference type="Proteomes" id="UP000001570">
    <property type="component" value="Chromosome"/>
</dbReference>
<dbReference type="GO" id="GO:0043595">
    <property type="term" value="C:endospore cortex"/>
    <property type="evidence" value="ECO:0007669"/>
    <property type="project" value="UniProtKB-SubCell"/>
</dbReference>
<dbReference type="GO" id="GO:0051117">
    <property type="term" value="F:ATPase binding"/>
    <property type="evidence" value="ECO:0000353"/>
    <property type="project" value="UniProtKB"/>
</dbReference>
<dbReference type="GO" id="GO:0008932">
    <property type="term" value="F:lytic endotransglycosylase activity"/>
    <property type="evidence" value="ECO:0000318"/>
    <property type="project" value="GO_Central"/>
</dbReference>
<dbReference type="GO" id="GO:0030435">
    <property type="term" value="P:sporulation resulting in formation of a cellular spore"/>
    <property type="evidence" value="ECO:0007669"/>
    <property type="project" value="UniProtKB-KW"/>
</dbReference>
<dbReference type="CDD" id="cd00118">
    <property type="entry name" value="LysM"/>
    <property type="match status" value="1"/>
</dbReference>
<dbReference type="Gene3D" id="3.10.350.10">
    <property type="entry name" value="LysM domain"/>
    <property type="match status" value="1"/>
</dbReference>
<dbReference type="InterPro" id="IPR018392">
    <property type="entry name" value="LysM_dom"/>
</dbReference>
<dbReference type="InterPro" id="IPR036779">
    <property type="entry name" value="LysM_dom_sf"/>
</dbReference>
<dbReference type="InterPro" id="IPR014248">
    <property type="entry name" value="Spore_coat_assembly_SafA"/>
</dbReference>
<dbReference type="NCBIfam" id="TIGR02899">
    <property type="entry name" value="spore_safA"/>
    <property type="match status" value="1"/>
</dbReference>
<dbReference type="Pfam" id="PF01476">
    <property type="entry name" value="LysM"/>
    <property type="match status" value="1"/>
</dbReference>
<dbReference type="SMART" id="SM00257">
    <property type="entry name" value="LysM"/>
    <property type="match status" value="1"/>
</dbReference>
<dbReference type="SUPFAM" id="SSF54106">
    <property type="entry name" value="LysM domain"/>
    <property type="match status" value="1"/>
</dbReference>
<dbReference type="PROSITE" id="PS51782">
    <property type="entry name" value="LYSM"/>
    <property type="match status" value="1"/>
</dbReference>
<reference key="1">
    <citation type="submission" date="1997-12" db="EMBL/GenBank/DDBJ databases">
        <title>A 17.8 kb segment in the spoVB-nadC region of the Bacillus subtilis 168 chromosome: sequencing and ruv operon identification.</title>
        <authorList>
            <person name="Tosato V."/>
            <person name="Bolotin A."/>
            <person name="Bertani I."/>
            <person name="Valentino I."/>
            <person name="Bruschi C.V."/>
        </authorList>
    </citation>
    <scope>NUCLEOTIDE SEQUENCE [GENOMIC DNA]</scope>
    <source>
        <strain>168</strain>
    </source>
</reference>
<reference key="2">
    <citation type="journal article" date="1998" name="FEMS Microbiol. Lett.">
        <title>Cloning of a novel gene yrbB, encoding a protein located in the spore integument of Bacillus subtilis.</title>
        <authorList>
            <person name="Takamatsu H."/>
            <person name="Hiraoka T."/>
            <person name="Kodama T."/>
            <person name="Koide H."/>
            <person name="Kozuka S."/>
            <person name="Tochikubo K."/>
            <person name="Watabe K."/>
        </authorList>
    </citation>
    <scope>NUCLEOTIDE SEQUENCE [GENOMIC DNA]</scope>
    <source>
        <strain>168 / 60015</strain>
    </source>
</reference>
<reference key="3">
    <citation type="journal article" date="1997" name="Nature">
        <title>The complete genome sequence of the Gram-positive bacterium Bacillus subtilis.</title>
        <authorList>
            <person name="Kunst F."/>
            <person name="Ogasawara N."/>
            <person name="Moszer I."/>
            <person name="Albertini A.M."/>
            <person name="Alloni G."/>
            <person name="Azevedo V."/>
            <person name="Bertero M.G."/>
            <person name="Bessieres P."/>
            <person name="Bolotin A."/>
            <person name="Borchert S."/>
            <person name="Borriss R."/>
            <person name="Boursier L."/>
            <person name="Brans A."/>
            <person name="Braun M."/>
            <person name="Brignell S.C."/>
            <person name="Bron S."/>
            <person name="Brouillet S."/>
            <person name="Bruschi C.V."/>
            <person name="Caldwell B."/>
            <person name="Capuano V."/>
            <person name="Carter N.M."/>
            <person name="Choi S.-K."/>
            <person name="Codani J.-J."/>
            <person name="Connerton I.F."/>
            <person name="Cummings N.J."/>
            <person name="Daniel R.A."/>
            <person name="Denizot F."/>
            <person name="Devine K.M."/>
            <person name="Duesterhoeft A."/>
            <person name="Ehrlich S.D."/>
            <person name="Emmerson P.T."/>
            <person name="Entian K.-D."/>
            <person name="Errington J."/>
            <person name="Fabret C."/>
            <person name="Ferrari E."/>
            <person name="Foulger D."/>
            <person name="Fritz C."/>
            <person name="Fujita M."/>
            <person name="Fujita Y."/>
            <person name="Fuma S."/>
            <person name="Galizzi A."/>
            <person name="Galleron N."/>
            <person name="Ghim S.-Y."/>
            <person name="Glaser P."/>
            <person name="Goffeau A."/>
            <person name="Golightly E.J."/>
            <person name="Grandi G."/>
            <person name="Guiseppi G."/>
            <person name="Guy B.J."/>
            <person name="Haga K."/>
            <person name="Haiech J."/>
            <person name="Harwood C.R."/>
            <person name="Henaut A."/>
            <person name="Hilbert H."/>
            <person name="Holsappel S."/>
            <person name="Hosono S."/>
            <person name="Hullo M.-F."/>
            <person name="Itaya M."/>
            <person name="Jones L.-M."/>
            <person name="Joris B."/>
            <person name="Karamata D."/>
            <person name="Kasahara Y."/>
            <person name="Klaerr-Blanchard M."/>
            <person name="Klein C."/>
            <person name="Kobayashi Y."/>
            <person name="Koetter P."/>
            <person name="Koningstein G."/>
            <person name="Krogh S."/>
            <person name="Kumano M."/>
            <person name="Kurita K."/>
            <person name="Lapidus A."/>
            <person name="Lardinois S."/>
            <person name="Lauber J."/>
            <person name="Lazarevic V."/>
            <person name="Lee S.-M."/>
            <person name="Levine A."/>
            <person name="Liu H."/>
            <person name="Masuda S."/>
            <person name="Mauel C."/>
            <person name="Medigue C."/>
            <person name="Medina N."/>
            <person name="Mellado R.P."/>
            <person name="Mizuno M."/>
            <person name="Moestl D."/>
            <person name="Nakai S."/>
            <person name="Noback M."/>
            <person name="Noone D."/>
            <person name="O'Reilly M."/>
            <person name="Ogawa K."/>
            <person name="Ogiwara A."/>
            <person name="Oudega B."/>
            <person name="Park S.-H."/>
            <person name="Parro V."/>
            <person name="Pohl T.M."/>
            <person name="Portetelle D."/>
            <person name="Porwollik S."/>
            <person name="Prescott A.M."/>
            <person name="Presecan E."/>
            <person name="Pujic P."/>
            <person name="Purnelle B."/>
            <person name="Rapoport G."/>
            <person name="Rey M."/>
            <person name="Reynolds S."/>
            <person name="Rieger M."/>
            <person name="Rivolta C."/>
            <person name="Rocha E."/>
            <person name="Roche B."/>
            <person name="Rose M."/>
            <person name="Sadaie Y."/>
            <person name="Sato T."/>
            <person name="Scanlan E."/>
            <person name="Schleich S."/>
            <person name="Schroeter R."/>
            <person name="Scoffone F."/>
            <person name="Sekiguchi J."/>
            <person name="Sekowska A."/>
            <person name="Seror S.J."/>
            <person name="Serror P."/>
            <person name="Shin B.-S."/>
            <person name="Soldo B."/>
            <person name="Sorokin A."/>
            <person name="Tacconi E."/>
            <person name="Takagi T."/>
            <person name="Takahashi H."/>
            <person name="Takemaru K."/>
            <person name="Takeuchi M."/>
            <person name="Tamakoshi A."/>
            <person name="Tanaka T."/>
            <person name="Terpstra P."/>
            <person name="Tognoni A."/>
            <person name="Tosato V."/>
            <person name="Uchiyama S."/>
            <person name="Vandenbol M."/>
            <person name="Vannier F."/>
            <person name="Vassarotti A."/>
            <person name="Viari A."/>
            <person name="Wambutt R."/>
            <person name="Wedler E."/>
            <person name="Wedler H."/>
            <person name="Weitzenegger T."/>
            <person name="Winters P."/>
            <person name="Wipat A."/>
            <person name="Yamamoto H."/>
            <person name="Yamane K."/>
            <person name="Yasumoto K."/>
            <person name="Yata K."/>
            <person name="Yoshida K."/>
            <person name="Yoshikawa H.-F."/>
            <person name="Zumstein E."/>
            <person name="Yoshikawa H."/>
            <person name="Danchin A."/>
        </authorList>
    </citation>
    <scope>NUCLEOTIDE SEQUENCE [LARGE SCALE GENOMIC DNA]</scope>
    <source>
        <strain>168</strain>
    </source>
</reference>
<reference key="4">
    <citation type="journal article" date="1999" name="J. Bacteriol.">
        <title>Characterization of the yrbA gene of Bacillus subtilis, involved in resistance and germination of spores.</title>
        <authorList>
            <person name="Takamatsu H."/>
            <person name="Kodama T."/>
            <person name="Nakayama T."/>
            <person name="Watabe K."/>
        </authorList>
    </citation>
    <scope>PROTEIN SEQUENCE OF 164-172</scope>
    <scope>TRANSCRIPTION</scope>
    <scope>MUTANT STUDIES</scope>
    <source>
        <strain>168</strain>
    </source>
</reference>
<reference key="5">
    <citation type="journal article" date="2000" name="J. Bacteriol.">
        <title>Morphogenetic proteins SpoVID and SafA form a complex during assembly of the Bacillus subtilis spore coat.</title>
        <authorList>
            <person name="Ozin A.J."/>
            <person name="Henriques A.O."/>
            <person name="Yi H."/>
            <person name="Moran C.P. Jr."/>
        </authorList>
    </citation>
    <scope>SUBCELLULAR LOCATION</scope>
    <scope>ASSOCIATION WITH SPOIVD</scope>
    <source>
        <strain>168</strain>
    </source>
</reference>
<keyword id="KW-0903">Direct protein sequencing</keyword>
<keyword id="KW-1185">Reference proteome</keyword>
<keyword id="KW-0749">Sporulation</keyword>
<protein>
    <recommendedName>
        <fullName>SpoIVD-associated factor A</fullName>
    </recommendedName>
    <alternativeName>
        <fullName>Morphogenetic protein SafA</fullName>
    </alternativeName>
</protein>
<proteinExistence type="evidence at protein level"/>
<organism>
    <name type="scientific">Bacillus subtilis (strain 168)</name>
    <dbReference type="NCBI Taxonomy" id="224308"/>
    <lineage>
        <taxon>Bacteria</taxon>
        <taxon>Bacillati</taxon>
        <taxon>Bacillota</taxon>
        <taxon>Bacilli</taxon>
        <taxon>Bacillales</taxon>
        <taxon>Bacillaceae</taxon>
        <taxon>Bacillus</taxon>
    </lineage>
</organism>
<gene>
    <name type="primary">safA</name>
    <name type="synonym">yrbA</name>
    <name type="ordered locus">BSU27840</name>
</gene>
<evidence type="ECO:0000255" key="1">
    <source>
        <dbReference type="PROSITE-ProRule" id="PRU01118"/>
    </source>
</evidence>
<evidence type="ECO:0000256" key="2">
    <source>
        <dbReference type="SAM" id="MobiDB-lite"/>
    </source>
</evidence>
<evidence type="ECO:0000269" key="3">
    <source>
    </source>
</evidence>
<evidence type="ECO:0000305" key="4"/>